<reference key="1">
    <citation type="journal article" date="2006" name="Proc. Natl. Acad. Sci. U.S.A.">
        <title>Identification of genes subject to positive selection in uropathogenic strains of Escherichia coli: a comparative genomics approach.</title>
        <authorList>
            <person name="Chen S.L."/>
            <person name="Hung C.-S."/>
            <person name="Xu J."/>
            <person name="Reigstad C.S."/>
            <person name="Magrini V."/>
            <person name="Sabo A."/>
            <person name="Blasiar D."/>
            <person name="Bieri T."/>
            <person name="Meyer R.R."/>
            <person name="Ozersky P."/>
            <person name="Armstrong J.R."/>
            <person name="Fulton R.S."/>
            <person name="Latreille J.P."/>
            <person name="Spieth J."/>
            <person name="Hooton T.M."/>
            <person name="Mardis E.R."/>
            <person name="Hultgren S.J."/>
            <person name="Gordon J.I."/>
        </authorList>
    </citation>
    <scope>NUCLEOTIDE SEQUENCE [LARGE SCALE GENOMIC DNA]</scope>
    <source>
        <strain>UTI89 / UPEC</strain>
    </source>
</reference>
<name>RIHC_ECOUT</name>
<gene>
    <name evidence="1" type="primary">rihC</name>
    <name type="ordered locus">UTI89_C0032</name>
</gene>
<sequence>MRLPIFLDTDPGIDDAVAIAAAIFAPELDLQLMTTVAGNVSVEKTTRNALQLLHFWNVDIPLAQGAAVPLVRAPRDAASVHGESGMAGYDFVEHNRQPLGIPAFLAIRDALMRAPEPVTLVAIGPLTNIALLLSQCPECKPYIRRLVIMGGSAGRGNCTPNAEFNIAADPEAAACVFRSGIEIVMCGLDVTNQAILTPDYLATLPELNRTGKMLHALFSHYRSGSMQSGLRMHDLCAIAWLVRPELFTLKPCFVAVETQGEFTSGTTVVDIDGCLGKPANVQVALDLDVKGFQQWVAEVLALAL</sequence>
<proteinExistence type="inferred from homology"/>
<accession>Q1RGH2</accession>
<comment type="function">
    <text evidence="1">Hydrolyzes both purine and pyrimidine ribonucleosides with a broad-substrate specificity.</text>
</comment>
<comment type="similarity">
    <text evidence="1">Belongs to the IUNH family. RihC subfamily.</text>
</comment>
<evidence type="ECO:0000255" key="1">
    <source>
        <dbReference type="HAMAP-Rule" id="MF_01432"/>
    </source>
</evidence>
<feature type="chain" id="PRO_1000024406" description="Non-specific ribonucleoside hydrolase RihC">
    <location>
        <begin position="1"/>
        <end position="304"/>
    </location>
</feature>
<feature type="active site" evidence="1">
    <location>
        <position position="233"/>
    </location>
</feature>
<keyword id="KW-0326">Glycosidase</keyword>
<keyword id="KW-0378">Hydrolase</keyword>
<dbReference type="EC" id="3.2.-.-" evidence="1"/>
<dbReference type="EMBL" id="CP000243">
    <property type="protein sequence ID" value="ABE05542.1"/>
    <property type="molecule type" value="Genomic_DNA"/>
</dbReference>
<dbReference type="RefSeq" id="WP_001239167.1">
    <property type="nucleotide sequence ID" value="NZ_CP064825.1"/>
</dbReference>
<dbReference type="SMR" id="Q1RGH2"/>
<dbReference type="KEGG" id="eci:UTI89_C0032"/>
<dbReference type="HOGENOM" id="CLU_036838_2_2_6"/>
<dbReference type="Proteomes" id="UP000001952">
    <property type="component" value="Chromosome"/>
</dbReference>
<dbReference type="GO" id="GO:0005829">
    <property type="term" value="C:cytosol"/>
    <property type="evidence" value="ECO:0007669"/>
    <property type="project" value="TreeGrafter"/>
</dbReference>
<dbReference type="GO" id="GO:0008477">
    <property type="term" value="F:purine nucleosidase activity"/>
    <property type="evidence" value="ECO:0007669"/>
    <property type="project" value="TreeGrafter"/>
</dbReference>
<dbReference type="GO" id="GO:0045437">
    <property type="term" value="F:uridine nucleosidase activity"/>
    <property type="evidence" value="ECO:0007669"/>
    <property type="project" value="UniProtKB-ARBA"/>
</dbReference>
<dbReference type="GO" id="GO:0006144">
    <property type="term" value="P:purine nucleobase metabolic process"/>
    <property type="evidence" value="ECO:0007669"/>
    <property type="project" value="UniProtKB-UniRule"/>
</dbReference>
<dbReference type="GO" id="GO:0006152">
    <property type="term" value="P:purine nucleoside catabolic process"/>
    <property type="evidence" value="ECO:0007669"/>
    <property type="project" value="TreeGrafter"/>
</dbReference>
<dbReference type="GO" id="GO:0006206">
    <property type="term" value="P:pyrimidine nucleobase metabolic process"/>
    <property type="evidence" value="ECO:0007669"/>
    <property type="project" value="UniProtKB-UniRule"/>
</dbReference>
<dbReference type="CDD" id="cd02651">
    <property type="entry name" value="nuc_hydro_IU_UC_XIUA"/>
    <property type="match status" value="1"/>
</dbReference>
<dbReference type="FunFam" id="3.90.245.10:FF:000002">
    <property type="entry name" value="Non-specific ribonucleoside hydrolase RihC"/>
    <property type="match status" value="1"/>
</dbReference>
<dbReference type="Gene3D" id="3.90.245.10">
    <property type="entry name" value="Ribonucleoside hydrolase-like"/>
    <property type="match status" value="1"/>
</dbReference>
<dbReference type="HAMAP" id="MF_01432">
    <property type="entry name" value="Nucleosid_hydro_RihC"/>
    <property type="match status" value="1"/>
</dbReference>
<dbReference type="InterPro" id="IPR015910">
    <property type="entry name" value="I/U_nuclsd_hydro_CS"/>
</dbReference>
<dbReference type="InterPro" id="IPR001910">
    <property type="entry name" value="Inosine/uridine_hydrolase_dom"/>
</dbReference>
<dbReference type="InterPro" id="IPR023186">
    <property type="entry name" value="IUNH"/>
</dbReference>
<dbReference type="InterPro" id="IPR022976">
    <property type="entry name" value="Nucleosid_hydro_RihC_nonspecif"/>
</dbReference>
<dbReference type="InterPro" id="IPR036452">
    <property type="entry name" value="Ribo_hydro-like"/>
</dbReference>
<dbReference type="NCBIfam" id="NF008036">
    <property type="entry name" value="PRK10768.1"/>
    <property type="match status" value="1"/>
</dbReference>
<dbReference type="PANTHER" id="PTHR12304">
    <property type="entry name" value="INOSINE-URIDINE PREFERRING NUCLEOSIDE HYDROLASE"/>
    <property type="match status" value="1"/>
</dbReference>
<dbReference type="PANTHER" id="PTHR12304:SF15">
    <property type="entry name" value="NON-SPECIFIC RIBONUCLEOSIDE HYDROLASE RIHC"/>
    <property type="match status" value="1"/>
</dbReference>
<dbReference type="Pfam" id="PF01156">
    <property type="entry name" value="IU_nuc_hydro"/>
    <property type="match status" value="1"/>
</dbReference>
<dbReference type="SUPFAM" id="SSF53590">
    <property type="entry name" value="Nucleoside hydrolase"/>
    <property type="match status" value="1"/>
</dbReference>
<dbReference type="PROSITE" id="PS01247">
    <property type="entry name" value="IUNH"/>
    <property type="match status" value="1"/>
</dbReference>
<protein>
    <recommendedName>
        <fullName evidence="1">Non-specific ribonucleoside hydrolase RihC</fullName>
        <ecNumber evidence="1">3.2.-.-</ecNumber>
    </recommendedName>
    <alternativeName>
        <fullName evidence="1">Purine/pyrimidine ribonucleoside hydrolase</fullName>
    </alternativeName>
</protein>
<organism>
    <name type="scientific">Escherichia coli (strain UTI89 / UPEC)</name>
    <dbReference type="NCBI Taxonomy" id="364106"/>
    <lineage>
        <taxon>Bacteria</taxon>
        <taxon>Pseudomonadati</taxon>
        <taxon>Pseudomonadota</taxon>
        <taxon>Gammaproteobacteria</taxon>
        <taxon>Enterobacterales</taxon>
        <taxon>Enterobacteriaceae</taxon>
        <taxon>Escherichia</taxon>
    </lineage>
</organism>